<gene>
    <name evidence="1" type="primary">dnaK</name>
    <name type="ordered locus">CBO2959</name>
    <name type="ordered locus">CLC_2855</name>
</gene>
<evidence type="ECO:0000255" key="1">
    <source>
        <dbReference type="HAMAP-Rule" id="MF_00332"/>
    </source>
</evidence>
<evidence type="ECO:0000256" key="2">
    <source>
        <dbReference type="SAM" id="MobiDB-lite"/>
    </source>
</evidence>
<organism>
    <name type="scientific">Clostridium botulinum (strain Hall / ATCC 3502 / NCTC 13319 / Type A)</name>
    <dbReference type="NCBI Taxonomy" id="441771"/>
    <lineage>
        <taxon>Bacteria</taxon>
        <taxon>Bacillati</taxon>
        <taxon>Bacillota</taxon>
        <taxon>Clostridia</taxon>
        <taxon>Eubacteriales</taxon>
        <taxon>Clostridiaceae</taxon>
        <taxon>Clostridium</taxon>
    </lineage>
</organism>
<name>DNAK_CLOBH</name>
<dbReference type="EMBL" id="CP000727">
    <property type="protein sequence ID" value="ABS38429.1"/>
    <property type="molecule type" value="Genomic_DNA"/>
</dbReference>
<dbReference type="EMBL" id="AM412317">
    <property type="protein sequence ID" value="CAL84522.1"/>
    <property type="molecule type" value="Genomic_DNA"/>
</dbReference>
<dbReference type="RefSeq" id="WP_003357980.1">
    <property type="nucleotide sequence ID" value="NC_009698.1"/>
</dbReference>
<dbReference type="RefSeq" id="YP_001255452.1">
    <property type="nucleotide sequence ID" value="NC_009495.1"/>
</dbReference>
<dbReference type="RefSeq" id="YP_001388688.1">
    <property type="nucleotide sequence ID" value="NC_009698.1"/>
</dbReference>
<dbReference type="SMR" id="A5I640"/>
<dbReference type="GeneID" id="5184256"/>
<dbReference type="KEGG" id="cbh:CLC_2855"/>
<dbReference type="KEGG" id="cbo:CBO2959"/>
<dbReference type="PATRIC" id="fig|413999.7.peg.2938"/>
<dbReference type="HOGENOM" id="CLU_005965_2_4_9"/>
<dbReference type="PRO" id="PR:A5I640"/>
<dbReference type="Proteomes" id="UP000001986">
    <property type="component" value="Chromosome"/>
</dbReference>
<dbReference type="GO" id="GO:0000774">
    <property type="term" value="F:adenyl-nucleotide exchange factor activity"/>
    <property type="evidence" value="ECO:0000318"/>
    <property type="project" value="GO_Central"/>
</dbReference>
<dbReference type="GO" id="GO:0005524">
    <property type="term" value="F:ATP binding"/>
    <property type="evidence" value="ECO:0007669"/>
    <property type="project" value="UniProtKB-UniRule"/>
</dbReference>
<dbReference type="GO" id="GO:0140662">
    <property type="term" value="F:ATP-dependent protein folding chaperone"/>
    <property type="evidence" value="ECO:0007669"/>
    <property type="project" value="InterPro"/>
</dbReference>
<dbReference type="GO" id="GO:0051082">
    <property type="term" value="F:unfolded protein binding"/>
    <property type="evidence" value="ECO:0007669"/>
    <property type="project" value="InterPro"/>
</dbReference>
<dbReference type="GO" id="GO:0071475">
    <property type="term" value="P:cellular hyperosmotic salinity response"/>
    <property type="evidence" value="ECO:0000315"/>
    <property type="project" value="CACAO"/>
</dbReference>
<dbReference type="GO" id="GO:0071468">
    <property type="term" value="P:cellular response to acidic pH"/>
    <property type="evidence" value="ECO:0000315"/>
    <property type="project" value="CACAO"/>
</dbReference>
<dbReference type="GO" id="GO:0034605">
    <property type="term" value="P:cellular response to heat"/>
    <property type="evidence" value="ECO:0000315"/>
    <property type="project" value="CACAO"/>
</dbReference>
<dbReference type="CDD" id="cd10234">
    <property type="entry name" value="ASKHA_NBD_HSP70_DnaK-like"/>
    <property type="match status" value="1"/>
</dbReference>
<dbReference type="FunFam" id="2.60.34.10:FF:000014">
    <property type="entry name" value="Chaperone protein DnaK HSP70"/>
    <property type="match status" value="1"/>
</dbReference>
<dbReference type="FunFam" id="1.20.1270.10:FF:000001">
    <property type="entry name" value="Molecular chaperone DnaK"/>
    <property type="match status" value="1"/>
</dbReference>
<dbReference type="FunFam" id="3.30.420.40:FF:000071">
    <property type="entry name" value="Molecular chaperone DnaK"/>
    <property type="match status" value="1"/>
</dbReference>
<dbReference type="FunFam" id="3.90.640.10:FF:000003">
    <property type="entry name" value="Molecular chaperone DnaK"/>
    <property type="match status" value="1"/>
</dbReference>
<dbReference type="Gene3D" id="1.20.1270.10">
    <property type="match status" value="1"/>
</dbReference>
<dbReference type="Gene3D" id="3.30.420.40">
    <property type="match status" value="2"/>
</dbReference>
<dbReference type="Gene3D" id="3.90.640.10">
    <property type="entry name" value="Actin, Chain A, domain 4"/>
    <property type="match status" value="1"/>
</dbReference>
<dbReference type="Gene3D" id="2.60.34.10">
    <property type="entry name" value="Substrate Binding Domain Of DNAk, Chain A, domain 1"/>
    <property type="match status" value="1"/>
</dbReference>
<dbReference type="HAMAP" id="MF_00332">
    <property type="entry name" value="DnaK"/>
    <property type="match status" value="1"/>
</dbReference>
<dbReference type="InterPro" id="IPR043129">
    <property type="entry name" value="ATPase_NBD"/>
</dbReference>
<dbReference type="InterPro" id="IPR012725">
    <property type="entry name" value="Chaperone_DnaK"/>
</dbReference>
<dbReference type="InterPro" id="IPR018181">
    <property type="entry name" value="Heat_shock_70_CS"/>
</dbReference>
<dbReference type="InterPro" id="IPR029048">
    <property type="entry name" value="HSP70_C_sf"/>
</dbReference>
<dbReference type="InterPro" id="IPR029047">
    <property type="entry name" value="HSP70_peptide-bd_sf"/>
</dbReference>
<dbReference type="InterPro" id="IPR013126">
    <property type="entry name" value="Hsp_70_fam"/>
</dbReference>
<dbReference type="NCBIfam" id="NF001413">
    <property type="entry name" value="PRK00290.1"/>
    <property type="match status" value="1"/>
</dbReference>
<dbReference type="NCBIfam" id="TIGR02350">
    <property type="entry name" value="prok_dnaK"/>
    <property type="match status" value="1"/>
</dbReference>
<dbReference type="PANTHER" id="PTHR19375">
    <property type="entry name" value="HEAT SHOCK PROTEIN 70KDA"/>
    <property type="match status" value="1"/>
</dbReference>
<dbReference type="Pfam" id="PF00012">
    <property type="entry name" value="HSP70"/>
    <property type="match status" value="1"/>
</dbReference>
<dbReference type="PRINTS" id="PR00301">
    <property type="entry name" value="HEATSHOCK70"/>
</dbReference>
<dbReference type="SUPFAM" id="SSF53067">
    <property type="entry name" value="Actin-like ATPase domain"/>
    <property type="match status" value="2"/>
</dbReference>
<dbReference type="SUPFAM" id="SSF100934">
    <property type="entry name" value="Heat shock protein 70kD (HSP70), C-terminal subdomain"/>
    <property type="match status" value="1"/>
</dbReference>
<dbReference type="SUPFAM" id="SSF100920">
    <property type="entry name" value="Heat shock protein 70kD (HSP70), peptide-binding domain"/>
    <property type="match status" value="1"/>
</dbReference>
<dbReference type="PROSITE" id="PS00297">
    <property type="entry name" value="HSP70_1"/>
    <property type="match status" value="1"/>
</dbReference>
<dbReference type="PROSITE" id="PS00329">
    <property type="entry name" value="HSP70_2"/>
    <property type="match status" value="1"/>
</dbReference>
<dbReference type="PROSITE" id="PS01036">
    <property type="entry name" value="HSP70_3"/>
    <property type="match status" value="1"/>
</dbReference>
<protein>
    <recommendedName>
        <fullName evidence="1">Chaperone protein DnaK</fullName>
    </recommendedName>
    <alternativeName>
        <fullName evidence="1">HSP70</fullName>
    </alternativeName>
    <alternativeName>
        <fullName evidence="1">Heat shock 70 kDa protein</fullName>
    </alternativeName>
    <alternativeName>
        <fullName evidence="1">Heat shock protein 70</fullName>
    </alternativeName>
</protein>
<reference key="1">
    <citation type="journal article" date="2007" name="Genome Res.">
        <title>Genome sequence of a proteolytic (Group I) Clostridium botulinum strain Hall A and comparative analysis of the clostridial genomes.</title>
        <authorList>
            <person name="Sebaihia M."/>
            <person name="Peck M.W."/>
            <person name="Minton N.P."/>
            <person name="Thomson N.R."/>
            <person name="Holden M.T.G."/>
            <person name="Mitchell W.J."/>
            <person name="Carter A.T."/>
            <person name="Bentley S.D."/>
            <person name="Mason D.R."/>
            <person name="Crossman L."/>
            <person name="Paul C.J."/>
            <person name="Ivens A."/>
            <person name="Wells-Bennik M.H.J."/>
            <person name="Davis I.J."/>
            <person name="Cerdeno-Tarraga A.M."/>
            <person name="Churcher C."/>
            <person name="Quail M.A."/>
            <person name="Chillingworth T."/>
            <person name="Feltwell T."/>
            <person name="Fraser A."/>
            <person name="Goodhead I."/>
            <person name="Hance Z."/>
            <person name="Jagels K."/>
            <person name="Larke N."/>
            <person name="Maddison M."/>
            <person name="Moule S."/>
            <person name="Mungall K."/>
            <person name="Norbertczak H."/>
            <person name="Rabbinowitsch E."/>
            <person name="Sanders M."/>
            <person name="Simmonds M."/>
            <person name="White B."/>
            <person name="Whithead S."/>
            <person name="Parkhill J."/>
        </authorList>
    </citation>
    <scope>NUCLEOTIDE SEQUENCE [LARGE SCALE GENOMIC DNA]</scope>
    <source>
        <strain>Hall / ATCC 3502 / NCTC 13319 / Type A</strain>
    </source>
</reference>
<reference key="2">
    <citation type="journal article" date="2007" name="PLoS ONE">
        <title>Analysis of the neurotoxin complex genes in Clostridium botulinum A1-A4 and B1 strains: BoNT/A3, /Ba4 and /B1 clusters are located within plasmids.</title>
        <authorList>
            <person name="Smith T.J."/>
            <person name="Hill K.K."/>
            <person name="Foley B.T."/>
            <person name="Detter J.C."/>
            <person name="Munk A.C."/>
            <person name="Bruce D.C."/>
            <person name="Doggett N.A."/>
            <person name="Smith L.A."/>
            <person name="Marks J.D."/>
            <person name="Xie G."/>
            <person name="Brettin T.S."/>
        </authorList>
    </citation>
    <scope>NUCLEOTIDE SEQUENCE [LARGE SCALE GENOMIC DNA]</scope>
    <source>
        <strain>Hall / ATCC 3502 / NCTC 13319 / Type A</strain>
    </source>
</reference>
<sequence>MAKIIGIDLGTTNSCVSVMEGGEPVVIPNAEGSRTTPSVVSFQANGERLIGQVAKRQAITNPEKTIISIKRYMGTDHKVNIDSTEYTPQQISAMVLQKLKADAEAYLGEKVTQAVITVPAYFNDSQRQATKDAGKIAGLEVLRIINEPTAASLAYGLDKMDTNEKILVYDLGGGTFDVSILELGDGVFEVKATNGDTKLGGDDFDQKLIDYIAETFKAENGIDLRNDKMAIQRLKEAAEKAKIELSSATQTNINLPFITADATGPKHIDMNLTRAKFNELTHDLVQRTLEPIKKSLEGSGYAMSDIDKIIMVGGSTRIPAVQDAVKDFTGKELSKGVNPDEVVAMGAAIQAGVLTGEVKDVLLLDVTPLTLGIETFGGVSTTLIEKNTTIPTRKSQVFSTAADGQTSVEIHVVQGERSMAADNKTLGRFTLSGIAPAPRGIPQIEVTFDIDANGIVNVSAKDKGTGKEANITITASTNLTDDEIEKAVNEAKKFEAEDKKRKESIEIKNNADQIVYQTEKTLTDLGDKVSAEDKAQIEEKVKAVKDVKDGEDLEAIKKATEDLTQTFYGISSKIYQQANPEGAQGAGFDPNNMGGANAGNASAGNDKKDDNVVDADFKVEDDK</sequence>
<accession>A5I640</accession>
<accession>A7G7C3</accession>
<keyword id="KW-0067">ATP-binding</keyword>
<keyword id="KW-0143">Chaperone</keyword>
<keyword id="KW-0547">Nucleotide-binding</keyword>
<keyword id="KW-0597">Phosphoprotein</keyword>
<keyword id="KW-1185">Reference proteome</keyword>
<keyword id="KW-0346">Stress response</keyword>
<proteinExistence type="inferred from homology"/>
<comment type="function">
    <text evidence="1">Acts as a chaperone.</text>
</comment>
<comment type="induction">
    <text evidence="1">By stress conditions e.g. heat shock.</text>
</comment>
<comment type="similarity">
    <text evidence="1">Belongs to the heat shock protein 70 family.</text>
</comment>
<feature type="chain" id="PRO_1000059540" description="Chaperone protein DnaK">
    <location>
        <begin position="1"/>
        <end position="623"/>
    </location>
</feature>
<feature type="region of interest" description="Disordered" evidence="2">
    <location>
        <begin position="580"/>
        <end position="623"/>
    </location>
</feature>
<feature type="compositionally biased region" description="Low complexity" evidence="2">
    <location>
        <begin position="591"/>
        <end position="604"/>
    </location>
</feature>
<feature type="compositionally biased region" description="Basic and acidic residues" evidence="2">
    <location>
        <begin position="605"/>
        <end position="623"/>
    </location>
</feature>
<feature type="modified residue" description="Phosphothreonine; by autocatalysis" evidence="1">
    <location>
        <position position="175"/>
    </location>
</feature>